<protein>
    <recommendedName>
        <fullName>Uncharacterized protein YhiJ</fullName>
    </recommendedName>
</protein>
<accession>P37627</accession>
<accession>Q2M7F1</accession>
<keyword id="KW-1185">Reference proteome</keyword>
<reference key="1">
    <citation type="journal article" date="1994" name="Nucleic Acids Res.">
        <title>Analysis of the Escherichia coli genome. V. DNA sequence of the region from 76.0 to 81.5 minutes.</title>
        <authorList>
            <person name="Sofia H.J."/>
            <person name="Burland V."/>
            <person name="Daniels D.L."/>
            <person name="Plunkett G. III"/>
            <person name="Blattner F.R."/>
        </authorList>
    </citation>
    <scope>NUCLEOTIDE SEQUENCE [LARGE SCALE GENOMIC DNA]</scope>
    <source>
        <strain>K12 / MG1655 / ATCC 47076</strain>
    </source>
</reference>
<reference key="2">
    <citation type="journal article" date="1997" name="Science">
        <title>The complete genome sequence of Escherichia coli K-12.</title>
        <authorList>
            <person name="Blattner F.R."/>
            <person name="Plunkett G. III"/>
            <person name="Bloch C.A."/>
            <person name="Perna N.T."/>
            <person name="Burland V."/>
            <person name="Riley M."/>
            <person name="Collado-Vides J."/>
            <person name="Glasner J.D."/>
            <person name="Rode C.K."/>
            <person name="Mayhew G.F."/>
            <person name="Gregor J."/>
            <person name="Davis N.W."/>
            <person name="Kirkpatrick H.A."/>
            <person name="Goeden M.A."/>
            <person name="Rose D.J."/>
            <person name="Mau B."/>
            <person name="Shao Y."/>
        </authorList>
    </citation>
    <scope>NUCLEOTIDE SEQUENCE [LARGE SCALE GENOMIC DNA]</scope>
    <source>
        <strain>K12 / MG1655 / ATCC 47076</strain>
    </source>
</reference>
<reference key="3">
    <citation type="journal article" date="2006" name="Mol. Syst. Biol.">
        <title>Highly accurate genome sequences of Escherichia coli K-12 strains MG1655 and W3110.</title>
        <authorList>
            <person name="Hayashi K."/>
            <person name="Morooka N."/>
            <person name="Yamamoto Y."/>
            <person name="Fujita K."/>
            <person name="Isono K."/>
            <person name="Choi S."/>
            <person name="Ohtsubo E."/>
            <person name="Baba T."/>
            <person name="Wanner B.L."/>
            <person name="Mori H."/>
            <person name="Horiuchi T."/>
        </authorList>
    </citation>
    <scope>NUCLEOTIDE SEQUENCE [LARGE SCALE GENOMIC DNA]</scope>
    <source>
        <strain>K12 / W3110 / ATCC 27325 / DSM 5911</strain>
    </source>
</reference>
<proteinExistence type="predicted"/>
<gene>
    <name type="primary">yhiJ</name>
    <name type="ordered locus">b3488</name>
    <name type="ordered locus">JW3455</name>
</gene>
<feature type="chain" id="PRO_0000169562" description="Uncharacterized protein YhiJ">
    <location>
        <begin position="1"/>
        <end position="540"/>
    </location>
</feature>
<name>YHIJ_ECOLI</name>
<dbReference type="EMBL" id="U00039">
    <property type="protein sequence ID" value="AAB18464.1"/>
    <property type="molecule type" value="Genomic_DNA"/>
</dbReference>
<dbReference type="EMBL" id="U00096">
    <property type="protein sequence ID" value="AAC76513.1"/>
    <property type="molecule type" value="Genomic_DNA"/>
</dbReference>
<dbReference type="EMBL" id="AP009048">
    <property type="protein sequence ID" value="BAE77805.1"/>
    <property type="molecule type" value="Genomic_DNA"/>
</dbReference>
<dbReference type="PIR" id="S47708">
    <property type="entry name" value="S47708"/>
</dbReference>
<dbReference type="RefSeq" id="NP_417945.1">
    <property type="nucleotide sequence ID" value="NC_000913.3"/>
</dbReference>
<dbReference type="RefSeq" id="WP_001393583.1">
    <property type="nucleotide sequence ID" value="NZ_LN832404.1"/>
</dbReference>
<dbReference type="BioGRID" id="4262515">
    <property type="interactions" value="2"/>
</dbReference>
<dbReference type="BioGRID" id="852309">
    <property type="interactions" value="3"/>
</dbReference>
<dbReference type="FunCoup" id="P37627">
    <property type="interactions" value="5"/>
</dbReference>
<dbReference type="IntAct" id="P37627">
    <property type="interactions" value="5"/>
</dbReference>
<dbReference type="STRING" id="511145.b3488"/>
<dbReference type="PaxDb" id="511145-b3488"/>
<dbReference type="EnsemblBacteria" id="AAC76513">
    <property type="protein sequence ID" value="AAC76513"/>
    <property type="gene ID" value="b3488"/>
</dbReference>
<dbReference type="GeneID" id="948001"/>
<dbReference type="KEGG" id="ecj:JW3455"/>
<dbReference type="KEGG" id="eco:b3488"/>
<dbReference type="KEGG" id="ecoc:C3026_18890"/>
<dbReference type="PATRIC" id="fig|511145.12.peg.3588"/>
<dbReference type="EchoBASE" id="EB2138"/>
<dbReference type="eggNOG" id="ENOG5033TNG">
    <property type="taxonomic scope" value="Bacteria"/>
</dbReference>
<dbReference type="HOGENOM" id="CLU_047689_0_0_6"/>
<dbReference type="InParanoid" id="P37627"/>
<dbReference type="OMA" id="FTIETNH"/>
<dbReference type="BioCyc" id="EcoCyc:EG12225-MONOMER"/>
<dbReference type="PRO" id="PR:P37627"/>
<dbReference type="Proteomes" id="UP000000625">
    <property type="component" value="Chromosome"/>
</dbReference>
<dbReference type="GO" id="GO:0019310">
    <property type="term" value="P:inositol catabolic process"/>
    <property type="evidence" value="ECO:0000315"/>
    <property type="project" value="EcoCyc"/>
</dbReference>
<dbReference type="InterPro" id="IPR025123">
    <property type="entry name" value="DUF4049"/>
</dbReference>
<dbReference type="InterPro" id="IPR029052">
    <property type="entry name" value="Metallo-depent_PP-like"/>
</dbReference>
<dbReference type="Pfam" id="PF13258">
    <property type="entry name" value="DUF4049"/>
    <property type="match status" value="1"/>
</dbReference>
<dbReference type="SUPFAM" id="SSF56300">
    <property type="entry name" value="Metallo-dependent phosphatases"/>
    <property type="match status" value="1"/>
</dbReference>
<organism>
    <name type="scientific">Escherichia coli (strain K12)</name>
    <dbReference type="NCBI Taxonomy" id="83333"/>
    <lineage>
        <taxon>Bacteria</taxon>
        <taxon>Pseudomonadati</taxon>
        <taxon>Pseudomonadota</taxon>
        <taxon>Gammaproteobacteria</taxon>
        <taxon>Enterobacterales</taxon>
        <taxon>Enterobacteriaceae</taxon>
        <taxon>Escherichia</taxon>
    </lineage>
</organism>
<sequence>MKIGTVAGTNDSTTTIATNDMVQEHVTNFTKELFGYIANGIGDDISSIARTMLGEVVEKIDDWQIERFQQSIQDDKISFTIQTDHSEKYSMLSGMRAHILRRNNNYQFIVTINSKNYGCSLDNTDINWCSIVYLLNNMTVNDNANDVAVTESYKPIWNWKISQYNVSDIKFETMIKPQFADRIYFSNCLPVDPTSTRPTYFGDTDGSVGAVLFALFATGHLGIMAEGENFLSQLLNIEDEVLNVLLRENFNEQLNTNVNTIISILNRRDIILESLQPYLVINKDAVTPCTFLGDQTGDRFSNICGDQFIIDLLKRIMSINENVHVLAGNHETNCNGNYMQNFTRMKPLDEDTYSGIKDYPVCFYDPKYKIMANHHGITFDDQRKRYIIGPITVSIDEMTNALDPVELAAIINKKHHAIINGKKFKTSRAISCRSFNRYFSVSTDYRPKLEALLACSQMLGINQVVAHNGNGGRERIGETGTVLGLNARDSKHAGRMFSMHNCQINPGAGPEITTPWKSYQHEKNRNGLMPLIRRRTMLQL</sequence>